<gene>
    <name evidence="1" type="primary">tilS</name>
    <name type="ordered locus">YPTB2985</name>
</gene>
<dbReference type="EC" id="6.3.4.19" evidence="1"/>
<dbReference type="EMBL" id="BX936398">
    <property type="protein sequence ID" value="CAH22223.1"/>
    <property type="molecule type" value="Genomic_DNA"/>
</dbReference>
<dbReference type="RefSeq" id="WP_011192857.1">
    <property type="nucleotide sequence ID" value="NC_006155.1"/>
</dbReference>
<dbReference type="SMR" id="Q667K7"/>
<dbReference type="KEGG" id="ypo:BZ17_3636"/>
<dbReference type="KEGG" id="yps:YPTB2985"/>
<dbReference type="PATRIC" id="fig|273123.14.peg.3817"/>
<dbReference type="Proteomes" id="UP000001011">
    <property type="component" value="Chromosome"/>
</dbReference>
<dbReference type="GO" id="GO:0005737">
    <property type="term" value="C:cytoplasm"/>
    <property type="evidence" value="ECO:0007669"/>
    <property type="project" value="UniProtKB-SubCell"/>
</dbReference>
<dbReference type="GO" id="GO:0005524">
    <property type="term" value="F:ATP binding"/>
    <property type="evidence" value="ECO:0007669"/>
    <property type="project" value="UniProtKB-UniRule"/>
</dbReference>
<dbReference type="GO" id="GO:0032267">
    <property type="term" value="F:tRNA(Ile)-lysidine synthase activity"/>
    <property type="evidence" value="ECO:0007669"/>
    <property type="project" value="UniProtKB-EC"/>
</dbReference>
<dbReference type="GO" id="GO:0006400">
    <property type="term" value="P:tRNA modification"/>
    <property type="evidence" value="ECO:0007669"/>
    <property type="project" value="UniProtKB-UniRule"/>
</dbReference>
<dbReference type="CDD" id="cd01992">
    <property type="entry name" value="TilS_N"/>
    <property type="match status" value="1"/>
</dbReference>
<dbReference type="Gene3D" id="1.20.59.20">
    <property type="match status" value="1"/>
</dbReference>
<dbReference type="Gene3D" id="3.40.50.620">
    <property type="entry name" value="HUPs"/>
    <property type="match status" value="1"/>
</dbReference>
<dbReference type="HAMAP" id="MF_01161">
    <property type="entry name" value="tRNA_Ile_lys_synt"/>
    <property type="match status" value="1"/>
</dbReference>
<dbReference type="InterPro" id="IPR012796">
    <property type="entry name" value="Lysidine-tRNA-synth_C"/>
</dbReference>
<dbReference type="InterPro" id="IPR014729">
    <property type="entry name" value="Rossmann-like_a/b/a_fold"/>
</dbReference>
<dbReference type="InterPro" id="IPR011063">
    <property type="entry name" value="TilS/TtcA_N"/>
</dbReference>
<dbReference type="InterPro" id="IPR012094">
    <property type="entry name" value="tRNA_Ile_lys_synt"/>
</dbReference>
<dbReference type="InterPro" id="IPR012795">
    <property type="entry name" value="tRNA_Ile_lys_synt_N"/>
</dbReference>
<dbReference type="InterPro" id="IPR015262">
    <property type="entry name" value="tRNA_Ile_lys_synt_subst-bd"/>
</dbReference>
<dbReference type="NCBIfam" id="TIGR02433">
    <property type="entry name" value="lysidine_TilS_C"/>
    <property type="match status" value="1"/>
</dbReference>
<dbReference type="NCBIfam" id="TIGR02432">
    <property type="entry name" value="lysidine_TilS_N"/>
    <property type="match status" value="1"/>
</dbReference>
<dbReference type="NCBIfam" id="NF007942">
    <property type="entry name" value="PRK10660.1"/>
    <property type="match status" value="1"/>
</dbReference>
<dbReference type="PANTHER" id="PTHR43033">
    <property type="entry name" value="TRNA(ILE)-LYSIDINE SYNTHASE-RELATED"/>
    <property type="match status" value="1"/>
</dbReference>
<dbReference type="PANTHER" id="PTHR43033:SF1">
    <property type="entry name" value="TRNA(ILE)-LYSIDINE SYNTHASE-RELATED"/>
    <property type="match status" value="1"/>
</dbReference>
<dbReference type="Pfam" id="PF01171">
    <property type="entry name" value="ATP_bind_3"/>
    <property type="match status" value="1"/>
</dbReference>
<dbReference type="Pfam" id="PF09179">
    <property type="entry name" value="TilS"/>
    <property type="match status" value="1"/>
</dbReference>
<dbReference type="Pfam" id="PF11734">
    <property type="entry name" value="TilS_C"/>
    <property type="match status" value="1"/>
</dbReference>
<dbReference type="SMART" id="SM00977">
    <property type="entry name" value="TilS_C"/>
    <property type="match status" value="1"/>
</dbReference>
<dbReference type="SUPFAM" id="SSF52402">
    <property type="entry name" value="Adenine nucleotide alpha hydrolases-like"/>
    <property type="match status" value="1"/>
</dbReference>
<dbReference type="SUPFAM" id="SSF82829">
    <property type="entry name" value="MesJ substrate recognition domain-like"/>
    <property type="match status" value="1"/>
</dbReference>
<dbReference type="SUPFAM" id="SSF56037">
    <property type="entry name" value="PheT/TilS domain"/>
    <property type="match status" value="1"/>
</dbReference>
<accession>Q667K7</accession>
<sequence length="460" mass="51647">MNLVTSKPNVLLNPLFAQLGENRHVLVGFSGGLDSTVLLHLLVCLRQQLIPELNIRAIHIHHGLNPQADSWVKHCMQQCDQWKIELKVVRVNIDPRQNGIEAAARTARYQAFSANLAAKEVLLTAQHLDDQCETFLLALKRGSGPAGLSAMAAKMPFAHSQLLRPLLAFSREILENYAQAQQLQWIEDDSNQDDRFDRNFLRLNVLPILNQRWPHFAQATARSAGLCAEQEQLLDELLAENLQQLQGPDRSLSIDGLLQASMAKRAAILRRWLASLGAPMPSQSQLQRLWLEVAMARQDAEPQLMIGTRQVRRFRQHLYLLMPLAEITTNYLPWATVKAAPNSSIIPLLPEPLWLPADLGVLRFVSAGGQAVRPAAVGEEISVRFGLQGDIKIVGRHHSRQSKKVWQELGIPPWQRERIPLLYFGEQLIAAAGVFVTQAGQANENEPCWHLDWDKPLKLG</sequence>
<protein>
    <recommendedName>
        <fullName evidence="1">tRNA(Ile)-lysidine synthase</fullName>
        <ecNumber evidence="1">6.3.4.19</ecNumber>
    </recommendedName>
    <alternativeName>
        <fullName evidence="1">tRNA(Ile)-2-lysyl-cytidine synthase</fullName>
    </alternativeName>
    <alternativeName>
        <fullName evidence="1">tRNA(Ile)-lysidine synthetase</fullName>
    </alternativeName>
</protein>
<proteinExistence type="inferred from homology"/>
<keyword id="KW-0067">ATP-binding</keyword>
<keyword id="KW-0963">Cytoplasm</keyword>
<keyword id="KW-0436">Ligase</keyword>
<keyword id="KW-0547">Nucleotide-binding</keyword>
<keyword id="KW-0819">tRNA processing</keyword>
<feature type="chain" id="PRO_0000181812" description="tRNA(Ile)-lysidine synthase">
    <location>
        <begin position="1"/>
        <end position="460"/>
    </location>
</feature>
<feature type="binding site" evidence="1">
    <location>
        <begin position="30"/>
        <end position="35"/>
    </location>
    <ligand>
        <name>ATP</name>
        <dbReference type="ChEBI" id="CHEBI:30616"/>
    </ligand>
</feature>
<name>TILS_YERPS</name>
<reference key="1">
    <citation type="journal article" date="2004" name="Proc. Natl. Acad. Sci. U.S.A.">
        <title>Insights into the evolution of Yersinia pestis through whole-genome comparison with Yersinia pseudotuberculosis.</title>
        <authorList>
            <person name="Chain P.S.G."/>
            <person name="Carniel E."/>
            <person name="Larimer F.W."/>
            <person name="Lamerdin J."/>
            <person name="Stoutland P.O."/>
            <person name="Regala W.M."/>
            <person name="Georgescu A.M."/>
            <person name="Vergez L.M."/>
            <person name="Land M.L."/>
            <person name="Motin V.L."/>
            <person name="Brubaker R.R."/>
            <person name="Fowler J."/>
            <person name="Hinnebusch J."/>
            <person name="Marceau M."/>
            <person name="Medigue C."/>
            <person name="Simonet M."/>
            <person name="Chenal-Francisque V."/>
            <person name="Souza B."/>
            <person name="Dacheux D."/>
            <person name="Elliott J.M."/>
            <person name="Derbise A."/>
            <person name="Hauser L.J."/>
            <person name="Garcia E."/>
        </authorList>
    </citation>
    <scope>NUCLEOTIDE SEQUENCE [LARGE SCALE GENOMIC DNA]</scope>
    <source>
        <strain>IP32953</strain>
    </source>
</reference>
<organism>
    <name type="scientific">Yersinia pseudotuberculosis serotype I (strain IP32953)</name>
    <dbReference type="NCBI Taxonomy" id="273123"/>
    <lineage>
        <taxon>Bacteria</taxon>
        <taxon>Pseudomonadati</taxon>
        <taxon>Pseudomonadota</taxon>
        <taxon>Gammaproteobacteria</taxon>
        <taxon>Enterobacterales</taxon>
        <taxon>Yersiniaceae</taxon>
        <taxon>Yersinia</taxon>
    </lineage>
</organism>
<comment type="function">
    <text evidence="1">Ligates lysine onto the cytidine present at position 34 of the AUA codon-specific tRNA(Ile) that contains the anticodon CAU, in an ATP-dependent manner. Cytidine is converted to lysidine, thus changing the amino acid specificity of the tRNA from methionine to isoleucine.</text>
</comment>
<comment type="catalytic activity">
    <reaction evidence="1">
        <text>cytidine(34) in tRNA(Ile2) + L-lysine + ATP = lysidine(34) in tRNA(Ile2) + AMP + diphosphate + H(+)</text>
        <dbReference type="Rhea" id="RHEA:43744"/>
        <dbReference type="Rhea" id="RHEA-COMP:10625"/>
        <dbReference type="Rhea" id="RHEA-COMP:10670"/>
        <dbReference type="ChEBI" id="CHEBI:15378"/>
        <dbReference type="ChEBI" id="CHEBI:30616"/>
        <dbReference type="ChEBI" id="CHEBI:32551"/>
        <dbReference type="ChEBI" id="CHEBI:33019"/>
        <dbReference type="ChEBI" id="CHEBI:82748"/>
        <dbReference type="ChEBI" id="CHEBI:83665"/>
        <dbReference type="ChEBI" id="CHEBI:456215"/>
        <dbReference type="EC" id="6.3.4.19"/>
    </reaction>
</comment>
<comment type="subcellular location">
    <subcellularLocation>
        <location evidence="1">Cytoplasm</location>
    </subcellularLocation>
</comment>
<comment type="domain">
    <text>The N-terminal region contains the highly conserved SGGXDS motif, predicted to be a P-loop motif involved in ATP binding.</text>
</comment>
<comment type="similarity">
    <text evidence="1">Belongs to the tRNA(Ile)-lysidine synthase family.</text>
</comment>
<evidence type="ECO:0000255" key="1">
    <source>
        <dbReference type="HAMAP-Rule" id="MF_01161"/>
    </source>
</evidence>